<name>MURG_PARPJ</name>
<protein>
    <recommendedName>
        <fullName evidence="1">UDP-N-acetylglucosamine--N-acetylmuramyl-(pentapeptide) pyrophosphoryl-undecaprenol N-acetylglucosamine transferase</fullName>
        <ecNumber evidence="1">2.4.1.227</ecNumber>
    </recommendedName>
    <alternativeName>
        <fullName evidence="1">Undecaprenyl-PP-MurNAc-pentapeptide-UDPGlcNAc GlcNAc transferase</fullName>
    </alternativeName>
</protein>
<feature type="chain" id="PRO_1000090414" description="UDP-N-acetylglucosamine--N-acetylmuramyl-(pentapeptide) pyrophosphoryl-undecaprenol N-acetylglucosamine transferase">
    <location>
        <begin position="1"/>
        <end position="372"/>
    </location>
</feature>
<feature type="binding site" evidence="1">
    <location>
        <begin position="16"/>
        <end position="18"/>
    </location>
    <ligand>
        <name>UDP-N-acetyl-alpha-D-glucosamine</name>
        <dbReference type="ChEBI" id="CHEBI:57705"/>
    </ligand>
</feature>
<feature type="binding site" evidence="1">
    <location>
        <position position="128"/>
    </location>
    <ligand>
        <name>UDP-N-acetyl-alpha-D-glucosamine</name>
        <dbReference type="ChEBI" id="CHEBI:57705"/>
    </ligand>
</feature>
<feature type="binding site" evidence="1">
    <location>
        <position position="164"/>
    </location>
    <ligand>
        <name>UDP-N-acetyl-alpha-D-glucosamine</name>
        <dbReference type="ChEBI" id="CHEBI:57705"/>
    </ligand>
</feature>
<feature type="binding site" evidence="1">
    <location>
        <position position="192"/>
    </location>
    <ligand>
        <name>UDP-N-acetyl-alpha-D-glucosamine</name>
        <dbReference type="ChEBI" id="CHEBI:57705"/>
    </ligand>
</feature>
<feature type="binding site" evidence="1">
    <location>
        <position position="250"/>
    </location>
    <ligand>
        <name>UDP-N-acetyl-alpha-D-glucosamine</name>
        <dbReference type="ChEBI" id="CHEBI:57705"/>
    </ligand>
</feature>
<feature type="binding site" evidence="1">
    <location>
        <position position="295"/>
    </location>
    <ligand>
        <name>UDP-N-acetyl-alpha-D-glucosamine</name>
        <dbReference type="ChEBI" id="CHEBI:57705"/>
    </ligand>
</feature>
<accession>B2SYX6</accession>
<sequence length="372" mass="39303">MTALPQRTLMVMAGGTGGHVFPGLAVAHLMQAWGWKVVWLGNPAGMEATLVPKHGIPMEYVRFGGLRGKGMKTKLMLPVNLLRACTQSLSVLRRVKPDVVLGMGGYITFPAGLMTALSGRPLVLHEQNSIAGLANKVLAKVAKRVLVAFPNALPHGEWTGNPIREELARAIAPKARYAQRSGPLNVLVVGGSLGAAALNEVVPRAVALLAPNERPRIVHQAGAKHIEALRENYSAAGLQAGADVELVPFIDDMTSAYANADLVICRSGAMTVSEISAVGVAAFFVPFPYAVDDHQTTNAAFLADNGAALVVQQRDLSAETLADWLRSQTRETLAEMAERSRSLAKPDATEQVAQICATVAGSISGASPEGKQ</sequence>
<proteinExistence type="inferred from homology"/>
<gene>
    <name evidence="1" type="primary">murG</name>
    <name type="ordered locus">Bphyt_3470</name>
</gene>
<reference key="1">
    <citation type="journal article" date="2011" name="J. Bacteriol.">
        <title>Complete genome sequence of the plant growth-promoting endophyte Burkholderia phytofirmans strain PsJN.</title>
        <authorList>
            <person name="Weilharter A."/>
            <person name="Mitter B."/>
            <person name="Shin M.V."/>
            <person name="Chain P.S."/>
            <person name="Nowak J."/>
            <person name="Sessitsch A."/>
        </authorList>
    </citation>
    <scope>NUCLEOTIDE SEQUENCE [LARGE SCALE GENOMIC DNA]</scope>
    <source>
        <strain>DSM 17436 / LMG 22146 / PsJN</strain>
    </source>
</reference>
<keyword id="KW-0131">Cell cycle</keyword>
<keyword id="KW-0132">Cell division</keyword>
<keyword id="KW-0997">Cell inner membrane</keyword>
<keyword id="KW-1003">Cell membrane</keyword>
<keyword id="KW-0133">Cell shape</keyword>
<keyword id="KW-0961">Cell wall biogenesis/degradation</keyword>
<keyword id="KW-0328">Glycosyltransferase</keyword>
<keyword id="KW-0472">Membrane</keyword>
<keyword id="KW-0573">Peptidoglycan synthesis</keyword>
<keyword id="KW-0808">Transferase</keyword>
<dbReference type="EC" id="2.4.1.227" evidence="1"/>
<dbReference type="EMBL" id="CP001052">
    <property type="protein sequence ID" value="ACD17860.1"/>
    <property type="molecule type" value="Genomic_DNA"/>
</dbReference>
<dbReference type="RefSeq" id="WP_012434421.1">
    <property type="nucleotide sequence ID" value="NC_010681.1"/>
</dbReference>
<dbReference type="SMR" id="B2SYX6"/>
<dbReference type="STRING" id="398527.Bphyt_3470"/>
<dbReference type="CAZy" id="GT28">
    <property type="family name" value="Glycosyltransferase Family 28"/>
</dbReference>
<dbReference type="KEGG" id="bpy:Bphyt_3470"/>
<dbReference type="eggNOG" id="COG0707">
    <property type="taxonomic scope" value="Bacteria"/>
</dbReference>
<dbReference type="HOGENOM" id="CLU_037404_2_0_4"/>
<dbReference type="OrthoDB" id="9808936at2"/>
<dbReference type="UniPathway" id="UPA00219"/>
<dbReference type="Proteomes" id="UP000001739">
    <property type="component" value="Chromosome 1"/>
</dbReference>
<dbReference type="GO" id="GO:0005886">
    <property type="term" value="C:plasma membrane"/>
    <property type="evidence" value="ECO:0007669"/>
    <property type="project" value="UniProtKB-SubCell"/>
</dbReference>
<dbReference type="GO" id="GO:0051991">
    <property type="term" value="F:UDP-N-acetyl-D-glucosamine:N-acetylmuramoyl-L-alanyl-D-glutamyl-meso-2,6-diaminopimelyl-D-alanyl-D-alanine-diphosphoundecaprenol 4-beta-N-acetylglucosaminlytransferase activity"/>
    <property type="evidence" value="ECO:0007669"/>
    <property type="project" value="RHEA"/>
</dbReference>
<dbReference type="GO" id="GO:0050511">
    <property type="term" value="F:undecaprenyldiphospho-muramoylpentapeptide beta-N-acetylglucosaminyltransferase activity"/>
    <property type="evidence" value="ECO:0007669"/>
    <property type="project" value="UniProtKB-UniRule"/>
</dbReference>
<dbReference type="GO" id="GO:0005975">
    <property type="term" value="P:carbohydrate metabolic process"/>
    <property type="evidence" value="ECO:0007669"/>
    <property type="project" value="InterPro"/>
</dbReference>
<dbReference type="GO" id="GO:0051301">
    <property type="term" value="P:cell division"/>
    <property type="evidence" value="ECO:0007669"/>
    <property type="project" value="UniProtKB-KW"/>
</dbReference>
<dbReference type="GO" id="GO:0071555">
    <property type="term" value="P:cell wall organization"/>
    <property type="evidence" value="ECO:0007669"/>
    <property type="project" value="UniProtKB-KW"/>
</dbReference>
<dbReference type="GO" id="GO:0030259">
    <property type="term" value="P:lipid glycosylation"/>
    <property type="evidence" value="ECO:0007669"/>
    <property type="project" value="UniProtKB-UniRule"/>
</dbReference>
<dbReference type="GO" id="GO:0009252">
    <property type="term" value="P:peptidoglycan biosynthetic process"/>
    <property type="evidence" value="ECO:0007669"/>
    <property type="project" value="UniProtKB-UniRule"/>
</dbReference>
<dbReference type="GO" id="GO:0008360">
    <property type="term" value="P:regulation of cell shape"/>
    <property type="evidence" value="ECO:0007669"/>
    <property type="project" value="UniProtKB-KW"/>
</dbReference>
<dbReference type="CDD" id="cd03785">
    <property type="entry name" value="GT28_MurG"/>
    <property type="match status" value="1"/>
</dbReference>
<dbReference type="Gene3D" id="3.40.50.2000">
    <property type="entry name" value="Glycogen Phosphorylase B"/>
    <property type="match status" value="2"/>
</dbReference>
<dbReference type="HAMAP" id="MF_00033">
    <property type="entry name" value="MurG"/>
    <property type="match status" value="1"/>
</dbReference>
<dbReference type="InterPro" id="IPR006009">
    <property type="entry name" value="GlcNAc_MurG"/>
</dbReference>
<dbReference type="InterPro" id="IPR007235">
    <property type="entry name" value="Glyco_trans_28_C"/>
</dbReference>
<dbReference type="InterPro" id="IPR004276">
    <property type="entry name" value="GlycoTrans_28_N"/>
</dbReference>
<dbReference type="NCBIfam" id="TIGR01133">
    <property type="entry name" value="murG"/>
    <property type="match status" value="1"/>
</dbReference>
<dbReference type="PANTHER" id="PTHR21015:SF22">
    <property type="entry name" value="GLYCOSYLTRANSFERASE"/>
    <property type="match status" value="1"/>
</dbReference>
<dbReference type="PANTHER" id="PTHR21015">
    <property type="entry name" value="UDP-N-ACETYLGLUCOSAMINE--N-ACETYLMURAMYL-(PENTAPEPTIDE) PYROPHOSPHORYL-UNDECAPRENOL N-ACETYLGLUCOSAMINE TRANSFERASE 1"/>
    <property type="match status" value="1"/>
</dbReference>
<dbReference type="Pfam" id="PF04101">
    <property type="entry name" value="Glyco_tran_28_C"/>
    <property type="match status" value="1"/>
</dbReference>
<dbReference type="Pfam" id="PF03033">
    <property type="entry name" value="Glyco_transf_28"/>
    <property type="match status" value="1"/>
</dbReference>
<dbReference type="SUPFAM" id="SSF53756">
    <property type="entry name" value="UDP-Glycosyltransferase/glycogen phosphorylase"/>
    <property type="match status" value="1"/>
</dbReference>
<evidence type="ECO:0000255" key="1">
    <source>
        <dbReference type="HAMAP-Rule" id="MF_00033"/>
    </source>
</evidence>
<comment type="function">
    <text evidence="1">Cell wall formation. Catalyzes the transfer of a GlcNAc subunit on undecaprenyl-pyrophosphoryl-MurNAc-pentapeptide (lipid intermediate I) to form undecaprenyl-pyrophosphoryl-MurNAc-(pentapeptide)GlcNAc (lipid intermediate II).</text>
</comment>
<comment type="catalytic activity">
    <reaction evidence="1">
        <text>di-trans,octa-cis-undecaprenyl diphospho-N-acetyl-alpha-D-muramoyl-L-alanyl-D-glutamyl-meso-2,6-diaminopimeloyl-D-alanyl-D-alanine + UDP-N-acetyl-alpha-D-glucosamine = di-trans,octa-cis-undecaprenyl diphospho-[N-acetyl-alpha-D-glucosaminyl-(1-&gt;4)]-N-acetyl-alpha-D-muramoyl-L-alanyl-D-glutamyl-meso-2,6-diaminopimeloyl-D-alanyl-D-alanine + UDP + H(+)</text>
        <dbReference type="Rhea" id="RHEA:31227"/>
        <dbReference type="ChEBI" id="CHEBI:15378"/>
        <dbReference type="ChEBI" id="CHEBI:57705"/>
        <dbReference type="ChEBI" id="CHEBI:58223"/>
        <dbReference type="ChEBI" id="CHEBI:61387"/>
        <dbReference type="ChEBI" id="CHEBI:61388"/>
        <dbReference type="EC" id="2.4.1.227"/>
    </reaction>
</comment>
<comment type="pathway">
    <text evidence="1">Cell wall biogenesis; peptidoglycan biosynthesis.</text>
</comment>
<comment type="subcellular location">
    <subcellularLocation>
        <location evidence="1">Cell inner membrane</location>
        <topology evidence="1">Peripheral membrane protein</topology>
        <orientation evidence="1">Cytoplasmic side</orientation>
    </subcellularLocation>
</comment>
<comment type="similarity">
    <text evidence="1">Belongs to the glycosyltransferase 28 family. MurG subfamily.</text>
</comment>
<organism>
    <name type="scientific">Paraburkholderia phytofirmans (strain DSM 17436 / LMG 22146 / PsJN)</name>
    <name type="common">Burkholderia phytofirmans</name>
    <dbReference type="NCBI Taxonomy" id="398527"/>
    <lineage>
        <taxon>Bacteria</taxon>
        <taxon>Pseudomonadati</taxon>
        <taxon>Pseudomonadota</taxon>
        <taxon>Betaproteobacteria</taxon>
        <taxon>Burkholderiales</taxon>
        <taxon>Burkholderiaceae</taxon>
        <taxon>Paraburkholderia</taxon>
    </lineage>
</organism>